<protein>
    <recommendedName>
        <fullName>Septin-8</fullName>
    </recommendedName>
</protein>
<reference key="1">
    <citation type="submission" date="2011-03" db="EMBL/GenBank/DDBJ databases">
        <title>Version 3 of the genome sequence of Otolemur garnettii(Bushbaby).</title>
        <authorList>
            <consortium name="The Broad Institute Genome Sequencing Platform"/>
            <person name="Di Palma F."/>
            <person name="Johnson J."/>
            <person name="Lander E.S."/>
            <person name="Lindblad-Toh K."/>
            <person name="Jaffe D.B."/>
            <person name="Gnerre S."/>
            <person name="MacCallum I."/>
            <person name="Przybylski D."/>
            <person name="Ribeiro F.J."/>
            <person name="Burton J.N."/>
            <person name="Walker B.J."/>
            <person name="Sharpe T."/>
            <person name="Hall G."/>
        </authorList>
    </citation>
    <scope>NUCLEOTIDE SEQUENCE [LARGE SCALE GENOMIC DNA]</scope>
</reference>
<name>SEPT8_OTOGA</name>
<sequence>MAATDLERVSSAEPEPRSLSLGGHVGFDSLPDQLVSKSVTQGFSFNILCVGETGIGKSTLMNTLFNTTFETEEASHHEACVRLRPQTYDLQESNVHLKLTIVDAVGFGDQINKDESYRPIVDYIDAQFENYLQEELKIRRSLFDYHDTRIHVCLYFITPTGHSLKSLDLVTMKKLDSKVNIIPIIAKADTISKSELHKFKIKIMGELVSNGVQIYQFPTDDEAVAEINAVMNAHLPFAVVGSTEEVKVGNKLVRARQYPWGVVQVENENHCDFVKLREMLIRVNMEDLREQTHSRHYELYRRCKLEEMGFQDSDGDSQPFSLQETYEAKRKEFLSELQRKEEEMRQMFVNKVKETELELKEKERELHEKFEHLKRVHQEEKRKVEEKRRELEEETNAFNRRKAAVEALQSQALHATSQQPLRKDKDKKKASGWSSIYSVTIP</sequence>
<dbReference type="EMBL" id="DP000894">
    <property type="protein sequence ID" value="ACH53050.1"/>
    <property type="molecule type" value="Genomic_DNA"/>
</dbReference>
<dbReference type="RefSeq" id="XP_003782250.1">
    <property type="nucleotide sequence ID" value="XM_003782202.2"/>
</dbReference>
<dbReference type="SMR" id="B5FW69"/>
<dbReference type="FunCoup" id="B5FW69">
    <property type="interactions" value="495"/>
</dbReference>
<dbReference type="STRING" id="30611.ENSOGAP00000013892"/>
<dbReference type="eggNOG" id="KOG3859">
    <property type="taxonomic scope" value="Eukaryota"/>
</dbReference>
<dbReference type="InParanoid" id="B5FW69"/>
<dbReference type="Proteomes" id="UP000005225">
    <property type="component" value="Unassembled WGS sequence"/>
</dbReference>
<dbReference type="GO" id="GO:0030424">
    <property type="term" value="C:axon"/>
    <property type="evidence" value="ECO:0007669"/>
    <property type="project" value="UniProtKB-SubCell"/>
</dbReference>
<dbReference type="GO" id="GO:0005856">
    <property type="term" value="C:cytoskeleton"/>
    <property type="evidence" value="ECO:0007669"/>
    <property type="project" value="UniProtKB-SubCell"/>
</dbReference>
<dbReference type="GO" id="GO:0098793">
    <property type="term" value="C:presynapse"/>
    <property type="evidence" value="ECO:0000250"/>
    <property type="project" value="UniProtKB"/>
</dbReference>
<dbReference type="GO" id="GO:0030672">
    <property type="term" value="C:synaptic vesicle membrane"/>
    <property type="evidence" value="ECO:0007669"/>
    <property type="project" value="UniProtKB-SubCell"/>
</dbReference>
<dbReference type="GO" id="GO:0005525">
    <property type="term" value="F:GTP binding"/>
    <property type="evidence" value="ECO:0007669"/>
    <property type="project" value="UniProtKB-KW"/>
</dbReference>
<dbReference type="GO" id="GO:0033157">
    <property type="term" value="P:regulation of intracellular protein transport"/>
    <property type="evidence" value="ECO:0000250"/>
    <property type="project" value="UniProtKB"/>
</dbReference>
<dbReference type="GO" id="GO:0031647">
    <property type="term" value="P:regulation of protein stability"/>
    <property type="evidence" value="ECO:0000250"/>
    <property type="project" value="UniProtKB"/>
</dbReference>
<dbReference type="GO" id="GO:0035542">
    <property type="term" value="P:regulation of SNARE complex assembly"/>
    <property type="evidence" value="ECO:0000250"/>
    <property type="project" value="UniProtKB"/>
</dbReference>
<dbReference type="CDD" id="cd01850">
    <property type="entry name" value="CDC_Septin"/>
    <property type="match status" value="1"/>
</dbReference>
<dbReference type="FunFam" id="3.40.50.300:FF:000036">
    <property type="entry name" value="septin-6 isoform X2"/>
    <property type="match status" value="1"/>
</dbReference>
<dbReference type="Gene3D" id="3.40.50.300">
    <property type="entry name" value="P-loop containing nucleotide triphosphate hydrolases"/>
    <property type="match status" value="1"/>
</dbReference>
<dbReference type="InterPro" id="IPR030379">
    <property type="entry name" value="G_SEPTIN_dom"/>
</dbReference>
<dbReference type="InterPro" id="IPR027417">
    <property type="entry name" value="P-loop_NTPase"/>
</dbReference>
<dbReference type="InterPro" id="IPR016491">
    <property type="entry name" value="Septin"/>
</dbReference>
<dbReference type="PANTHER" id="PTHR18884">
    <property type="entry name" value="SEPTIN"/>
    <property type="match status" value="1"/>
</dbReference>
<dbReference type="Pfam" id="PF00735">
    <property type="entry name" value="Septin"/>
    <property type="match status" value="1"/>
</dbReference>
<dbReference type="PIRSF" id="PIRSF006698">
    <property type="entry name" value="Septin"/>
    <property type="match status" value="1"/>
</dbReference>
<dbReference type="SUPFAM" id="SSF52540">
    <property type="entry name" value="P-loop containing nucleoside triphosphate hydrolases"/>
    <property type="match status" value="1"/>
</dbReference>
<dbReference type="PROSITE" id="PS51719">
    <property type="entry name" value="G_SEPTIN"/>
    <property type="match status" value="1"/>
</dbReference>
<gene>
    <name evidence="4" type="primary">SEPTIN8</name>
    <name type="synonym">SEPT8</name>
</gene>
<comment type="function">
    <text evidence="2 4">Filament-forming cytoskeletal GTPase (By similarity). May play a role in platelet secretion (By similarity). Seems to participate in the process of SNARE complex formation in synaptic vesicles (By similarity).</text>
</comment>
<comment type="subunit">
    <text evidence="2 3 4">Septins polymerize into heterooligomeric protein complexes that form filaments, and can associate with cellular membranes, actin filaments and microtubules. GTPase activity is required for filament formation (By similarity). Interacts with CDK14, SEPTIN4, SEPTIN5 and SEPTIN7 (By similarity). Interacts with VAMP2; the interaction inhibits interaction of VAMP2 with SYP (By similarity). Interacts with STX1A (By similarity).</text>
</comment>
<comment type="subcellular location">
    <subcellularLocation>
        <location evidence="2">Cytoplasm</location>
    </subcellularLocation>
    <subcellularLocation>
        <location evidence="1">Cytoplasm</location>
        <location evidence="1">Cytoskeleton</location>
    </subcellularLocation>
    <subcellularLocation>
        <location evidence="2">Synapse</location>
    </subcellularLocation>
    <subcellularLocation>
        <location evidence="2">Cell projection</location>
        <location evidence="2">Axon</location>
    </subcellularLocation>
    <subcellularLocation>
        <location evidence="2">Cytoplasmic vesicle</location>
        <location evidence="2">Secretory vesicle</location>
        <location evidence="2">Synaptic vesicle membrane</location>
    </subcellularLocation>
    <subcellularLocation>
        <location evidence="2">Presynapse</location>
    </subcellularLocation>
    <text evidence="2">Expressed in axons of immature neurons, localizes to synapses in mature neurons.</text>
</comment>
<comment type="similarity">
    <text evidence="6">Belongs to the TRAFAC class TrmE-Era-EngA-EngB-Septin-like GTPase superfamily. Septin GTPase family.</text>
</comment>
<keyword id="KW-0007">Acetylation</keyword>
<keyword id="KW-0966">Cell projection</keyword>
<keyword id="KW-0175">Coiled coil</keyword>
<keyword id="KW-0963">Cytoplasm</keyword>
<keyword id="KW-0968">Cytoplasmic vesicle</keyword>
<keyword id="KW-0206">Cytoskeleton</keyword>
<keyword id="KW-0342">GTP-binding</keyword>
<keyword id="KW-0472">Membrane</keyword>
<keyword id="KW-0547">Nucleotide-binding</keyword>
<keyword id="KW-0597">Phosphoprotein</keyword>
<keyword id="KW-1185">Reference proteome</keyword>
<keyword id="KW-0770">Synapse</keyword>
<proteinExistence type="inferred from homology"/>
<feature type="initiator methionine" description="Removed" evidence="4">
    <location>
        <position position="1"/>
    </location>
</feature>
<feature type="chain" id="PRO_0000363227" description="Septin-8">
    <location>
        <begin position="2"/>
        <end position="442"/>
    </location>
</feature>
<feature type="domain" description="Septin-type G" evidence="6">
    <location>
        <begin position="41"/>
        <end position="307"/>
    </location>
</feature>
<feature type="region of interest" description="Disordered" evidence="7">
    <location>
        <begin position="1"/>
        <end position="23"/>
    </location>
</feature>
<feature type="region of interest" description="G1 motif" evidence="6">
    <location>
        <begin position="51"/>
        <end position="58"/>
    </location>
</feature>
<feature type="region of interest" description="G3 motif" evidence="6">
    <location>
        <begin position="103"/>
        <end position="106"/>
    </location>
</feature>
<feature type="region of interest" description="G4 motif" evidence="6">
    <location>
        <begin position="186"/>
        <end position="189"/>
    </location>
</feature>
<feature type="region of interest" description="Disordered" evidence="7">
    <location>
        <begin position="377"/>
        <end position="442"/>
    </location>
</feature>
<feature type="coiled-coil region" evidence="5">
    <location>
        <begin position="322"/>
        <end position="410"/>
    </location>
</feature>
<feature type="compositionally biased region" description="Basic and acidic residues" evidence="7">
    <location>
        <begin position="1"/>
        <end position="16"/>
    </location>
</feature>
<feature type="compositionally biased region" description="Basic and acidic residues" evidence="7">
    <location>
        <begin position="377"/>
        <end position="391"/>
    </location>
</feature>
<feature type="compositionally biased region" description="Polar residues" evidence="7">
    <location>
        <begin position="408"/>
        <end position="420"/>
    </location>
</feature>
<feature type="compositionally biased region" description="Polar residues" evidence="7">
    <location>
        <begin position="432"/>
        <end position="442"/>
    </location>
</feature>
<feature type="binding site" evidence="1">
    <location>
        <begin position="51"/>
        <end position="58"/>
    </location>
    <ligand>
        <name>GTP</name>
        <dbReference type="ChEBI" id="CHEBI:37565"/>
    </ligand>
</feature>
<feature type="binding site" evidence="1">
    <location>
        <position position="106"/>
    </location>
    <ligand>
        <name>GTP</name>
        <dbReference type="ChEBI" id="CHEBI:37565"/>
    </ligand>
</feature>
<feature type="binding site" evidence="1">
    <location>
        <begin position="187"/>
        <end position="195"/>
    </location>
    <ligand>
        <name>GTP</name>
        <dbReference type="ChEBI" id="CHEBI:37565"/>
    </ligand>
</feature>
<feature type="binding site" evidence="1">
    <location>
        <position position="241"/>
    </location>
    <ligand>
        <name>GTP</name>
        <dbReference type="ChEBI" id="CHEBI:37565"/>
    </ligand>
</feature>
<feature type="binding site" evidence="1">
    <location>
        <position position="256"/>
    </location>
    <ligand>
        <name>GTP</name>
        <dbReference type="ChEBI" id="CHEBI:37565"/>
    </ligand>
</feature>
<feature type="modified residue" description="N-acetylalanine" evidence="4">
    <location>
        <position position="2"/>
    </location>
</feature>
<feature type="modified residue" description="Phosphoserine" evidence="4">
    <location>
        <position position="10"/>
    </location>
</feature>
<organism>
    <name type="scientific">Otolemur garnettii</name>
    <name type="common">Small-eared galago</name>
    <name type="synonym">Garnett's greater bushbaby</name>
    <dbReference type="NCBI Taxonomy" id="30611"/>
    <lineage>
        <taxon>Eukaryota</taxon>
        <taxon>Metazoa</taxon>
        <taxon>Chordata</taxon>
        <taxon>Craniata</taxon>
        <taxon>Vertebrata</taxon>
        <taxon>Euteleostomi</taxon>
        <taxon>Mammalia</taxon>
        <taxon>Eutheria</taxon>
        <taxon>Euarchontoglires</taxon>
        <taxon>Primates</taxon>
        <taxon>Strepsirrhini</taxon>
        <taxon>Lorisiformes</taxon>
        <taxon>Galagidae</taxon>
        <taxon>Otolemur</taxon>
    </lineage>
</organism>
<evidence type="ECO:0000250" key="1"/>
<evidence type="ECO:0000250" key="2">
    <source>
        <dbReference type="UniProtKB" id="B0BNF1"/>
    </source>
</evidence>
<evidence type="ECO:0000250" key="3">
    <source>
        <dbReference type="UniProtKB" id="Q8CHH9"/>
    </source>
</evidence>
<evidence type="ECO:0000250" key="4">
    <source>
        <dbReference type="UniProtKB" id="Q92599"/>
    </source>
</evidence>
<evidence type="ECO:0000255" key="5"/>
<evidence type="ECO:0000255" key="6">
    <source>
        <dbReference type="PROSITE-ProRule" id="PRU01056"/>
    </source>
</evidence>
<evidence type="ECO:0000256" key="7">
    <source>
        <dbReference type="SAM" id="MobiDB-lite"/>
    </source>
</evidence>
<accession>B5FW69</accession>